<accession>B7LSB3</accession>
<sequence length="78" mass="8660">MASLIQVRDLLALRGRMEAAQISQTLNTPQPMINAMLQQLESMGKAVRIQEEPDGCLSGSCKSCPEGKACLREWWALR</sequence>
<feature type="chain" id="PRO_1000201327" description="Probable [Fe-S]-dependent transcriptional repressor">
    <location>
        <begin position="1"/>
        <end position="78"/>
    </location>
</feature>
<feature type="binding site" evidence="1">
    <location>
        <position position="56"/>
    </location>
    <ligand>
        <name>iron-sulfur cluster</name>
        <dbReference type="ChEBI" id="CHEBI:30408"/>
    </ligand>
</feature>
<feature type="binding site" evidence="1">
    <location>
        <position position="61"/>
    </location>
    <ligand>
        <name>iron-sulfur cluster</name>
        <dbReference type="ChEBI" id="CHEBI:30408"/>
    </ligand>
</feature>
<feature type="binding site" evidence="1">
    <location>
        <position position="64"/>
    </location>
    <ligand>
        <name>iron-sulfur cluster</name>
        <dbReference type="ChEBI" id="CHEBI:30408"/>
    </ligand>
</feature>
<feature type="binding site" evidence="1">
    <location>
        <position position="70"/>
    </location>
    <ligand>
        <name>iron-sulfur cluster</name>
        <dbReference type="ChEBI" id="CHEBI:30408"/>
    </ligand>
</feature>
<organism>
    <name type="scientific">Escherichia fergusonii (strain ATCC 35469 / DSM 13698 / CCUG 18766 / IAM 14443 / JCM 21226 / LMG 7866 / NBRC 102419 / NCTC 12128 / CDC 0568-73)</name>
    <dbReference type="NCBI Taxonomy" id="585054"/>
    <lineage>
        <taxon>Bacteria</taxon>
        <taxon>Pseudomonadati</taxon>
        <taxon>Pseudomonadota</taxon>
        <taxon>Gammaproteobacteria</taxon>
        <taxon>Enterobacterales</taxon>
        <taxon>Enterobacteriaceae</taxon>
        <taxon>Escherichia</taxon>
    </lineage>
</organism>
<protein>
    <recommendedName>
        <fullName evidence="1">Probable [Fe-S]-dependent transcriptional repressor</fullName>
    </recommendedName>
</protein>
<proteinExistence type="inferred from homology"/>
<reference key="1">
    <citation type="journal article" date="2009" name="PLoS Genet.">
        <title>Organised genome dynamics in the Escherichia coli species results in highly diverse adaptive paths.</title>
        <authorList>
            <person name="Touchon M."/>
            <person name="Hoede C."/>
            <person name="Tenaillon O."/>
            <person name="Barbe V."/>
            <person name="Baeriswyl S."/>
            <person name="Bidet P."/>
            <person name="Bingen E."/>
            <person name="Bonacorsi S."/>
            <person name="Bouchier C."/>
            <person name="Bouvet O."/>
            <person name="Calteau A."/>
            <person name="Chiapello H."/>
            <person name="Clermont O."/>
            <person name="Cruveiller S."/>
            <person name="Danchin A."/>
            <person name="Diard M."/>
            <person name="Dossat C."/>
            <person name="Karoui M.E."/>
            <person name="Frapy E."/>
            <person name="Garry L."/>
            <person name="Ghigo J.M."/>
            <person name="Gilles A.M."/>
            <person name="Johnson J."/>
            <person name="Le Bouguenec C."/>
            <person name="Lescat M."/>
            <person name="Mangenot S."/>
            <person name="Martinez-Jehanne V."/>
            <person name="Matic I."/>
            <person name="Nassif X."/>
            <person name="Oztas S."/>
            <person name="Petit M.A."/>
            <person name="Pichon C."/>
            <person name="Rouy Z."/>
            <person name="Ruf C.S."/>
            <person name="Schneider D."/>
            <person name="Tourret J."/>
            <person name="Vacherie B."/>
            <person name="Vallenet D."/>
            <person name="Medigue C."/>
            <person name="Rocha E.P.C."/>
            <person name="Denamur E."/>
        </authorList>
    </citation>
    <scope>NUCLEOTIDE SEQUENCE [LARGE SCALE GENOMIC DNA]</scope>
    <source>
        <strain>ATCC 35469 / DSM 13698 / BCRC 15582 / CCUG 18766 / IAM 14443 / JCM 21226 / LMG 7866 / NBRC 102419 / NCTC 12128 / CDC 0568-73</strain>
    </source>
</reference>
<keyword id="KW-0238">DNA-binding</keyword>
<keyword id="KW-0408">Iron</keyword>
<keyword id="KW-0411">Iron-sulfur</keyword>
<keyword id="KW-0479">Metal-binding</keyword>
<keyword id="KW-0678">Repressor</keyword>
<keyword id="KW-0804">Transcription</keyword>
<keyword id="KW-0805">Transcription regulation</keyword>
<gene>
    <name evidence="1" type="primary">feoC</name>
    <name type="ordered locus">EFER_3378</name>
</gene>
<dbReference type="EMBL" id="CU928158">
    <property type="protein sequence ID" value="CAQ90856.1"/>
    <property type="molecule type" value="Genomic_DNA"/>
</dbReference>
<dbReference type="RefSeq" id="WP_000157586.1">
    <property type="nucleotide sequence ID" value="NC_011740.1"/>
</dbReference>
<dbReference type="SMR" id="B7LSB3"/>
<dbReference type="GeneID" id="86948257"/>
<dbReference type="KEGG" id="efe:EFER_3378"/>
<dbReference type="HOGENOM" id="CLU_189182_0_0_6"/>
<dbReference type="OrthoDB" id="6903254at2"/>
<dbReference type="Proteomes" id="UP000000745">
    <property type="component" value="Chromosome"/>
</dbReference>
<dbReference type="GO" id="GO:0003677">
    <property type="term" value="F:DNA binding"/>
    <property type="evidence" value="ECO:0007669"/>
    <property type="project" value="UniProtKB-KW"/>
</dbReference>
<dbReference type="GO" id="GO:0005506">
    <property type="term" value="F:iron ion binding"/>
    <property type="evidence" value="ECO:0007669"/>
    <property type="project" value="UniProtKB-UniRule"/>
</dbReference>
<dbReference type="GO" id="GO:0051536">
    <property type="term" value="F:iron-sulfur cluster binding"/>
    <property type="evidence" value="ECO:0007669"/>
    <property type="project" value="UniProtKB-KW"/>
</dbReference>
<dbReference type="Gene3D" id="1.10.10.10">
    <property type="entry name" value="Winged helix-like DNA-binding domain superfamily/Winged helix DNA-binding domain"/>
    <property type="match status" value="1"/>
</dbReference>
<dbReference type="HAMAP" id="MF_01586">
    <property type="entry name" value="FeoC"/>
    <property type="match status" value="1"/>
</dbReference>
<dbReference type="InterPro" id="IPR023732">
    <property type="entry name" value="FeoC"/>
</dbReference>
<dbReference type="InterPro" id="IPR015102">
    <property type="entry name" value="Tscrpt_reg_HTH_FeoC"/>
</dbReference>
<dbReference type="InterPro" id="IPR036388">
    <property type="entry name" value="WH-like_DNA-bd_sf"/>
</dbReference>
<dbReference type="InterPro" id="IPR036390">
    <property type="entry name" value="WH_DNA-bd_sf"/>
</dbReference>
<dbReference type="NCBIfam" id="NF011960">
    <property type="entry name" value="PRK15431.1"/>
    <property type="match status" value="1"/>
</dbReference>
<dbReference type="Pfam" id="PF09012">
    <property type="entry name" value="FeoC"/>
    <property type="match status" value="1"/>
</dbReference>
<dbReference type="SUPFAM" id="SSF46785">
    <property type="entry name" value="Winged helix' DNA-binding domain"/>
    <property type="match status" value="1"/>
</dbReference>
<name>FEOC_ESCF3</name>
<evidence type="ECO:0000255" key="1">
    <source>
        <dbReference type="HAMAP-Rule" id="MF_01586"/>
    </source>
</evidence>
<comment type="function">
    <text evidence="1">May function as a transcriptional regulator that controls feoABC expression.</text>
</comment>
<comment type="similarity">
    <text evidence="1">Belongs to the FeoC family.</text>
</comment>